<evidence type="ECO:0000250" key="1">
    <source>
        <dbReference type="UniProtKB" id="Q12809"/>
    </source>
</evidence>
<evidence type="ECO:0000250" key="2">
    <source>
        <dbReference type="UniProtKB" id="Q63472"/>
    </source>
</evidence>
<evidence type="ECO:0000255" key="3"/>
<evidence type="ECO:0000255" key="4">
    <source>
        <dbReference type="PROSITE-ProRule" id="PRU00060"/>
    </source>
</evidence>
<evidence type="ECO:0000256" key="5">
    <source>
        <dbReference type="SAM" id="MobiDB-lite"/>
    </source>
</evidence>
<evidence type="ECO:0000269" key="6">
    <source>
    </source>
</evidence>
<evidence type="ECO:0000269" key="7">
    <source>
    </source>
</evidence>
<evidence type="ECO:0000269" key="8">
    <source>
    </source>
</evidence>
<evidence type="ECO:0000269" key="9">
    <source>
    </source>
</evidence>
<evidence type="ECO:0000305" key="10"/>
<evidence type="ECO:0000312" key="11">
    <source>
        <dbReference type="RGD" id="620304"/>
    </source>
</evidence>
<proteinExistence type="evidence at protein level"/>
<reference key="1">
    <citation type="journal article" date="1997" name="J. Neurosci.">
        <title>Identification of two nervous system-specific members of the erg potassium channel gene family.</title>
        <authorList>
            <person name="Shi W."/>
            <person name="Wymore R.S."/>
            <person name="Wang H.-S."/>
            <person name="Pan Z."/>
            <person name="Cohen I.S."/>
            <person name="McKinnon D."/>
            <person name="Dixon J.E."/>
        </authorList>
    </citation>
    <scope>NUCLEOTIDE SEQUENCE [MRNA]</scope>
    <scope>FUNCTION</scope>
    <scope>TRANSPORTER ACTIVITY</scope>
    <source>
        <tissue>Cervical ganglion</tissue>
    </source>
</reference>
<reference key="2">
    <citation type="journal article" date="2000" name="J. Neuroendocrinol.">
        <title>Expression of mRNA for voltage-dependent and inward-rectifying K channels in GH3/B6 cells and rat pituitary.</title>
        <authorList>
            <person name="Wulfsen I."/>
            <person name="Hauber H.-P."/>
            <person name="Schiemann D."/>
            <person name="Bauer C.K."/>
            <person name="Schwarz J.R."/>
        </authorList>
    </citation>
    <scope>TISSUE SPECIFICITY</scope>
</reference>
<reference key="3">
    <citation type="journal article" date="2001" name="Pflugers Arch.">
        <title>Erg1, erg2 and erg3 K channel subunits are able to form heteromultimers.</title>
        <authorList>
            <person name="Wimmers S."/>
            <person name="Wulfsen I."/>
            <person name="Bauer C.K."/>
            <person name="Schwarz J.R."/>
        </authorList>
    </citation>
    <scope>FUNCTION</scope>
    <scope>TRANSPORTER ACTIVITY</scope>
    <scope>SUBUNIT</scope>
    <scope>MUTAGENESIS OF GLY-480</scope>
</reference>
<reference key="4">
    <citation type="journal article" date="2001" name="J. Neurosci.">
        <title>Differential expression of genes encoding subthreshold-operating voltage-gated K+ channels in brain.</title>
        <authorList>
            <person name="Saganich M.J."/>
            <person name="Machado E."/>
            <person name="Rudy B."/>
        </authorList>
    </citation>
    <scope>TISSUE SPECIFICITY</scope>
</reference>
<protein>
    <recommendedName>
        <fullName evidence="10">Voltage-gated inwardly rectifying potassium channel KCNH6</fullName>
    </recommendedName>
    <alternativeName>
        <fullName>Ether-a-go-go-related gene potassium channel 2</fullName>
        <shortName>ERG-2</shortName>
        <shortName>Eag-related protein 2</shortName>
        <shortName>Ether-a-go-go-related protein 2</shortName>
    </alternativeName>
    <alternativeName>
        <fullName>Potassium voltage-gated channel subfamily H member 6</fullName>
    </alternativeName>
    <alternativeName>
        <fullName>Voltage-gated potassium channel subunit Kv11.2</fullName>
    </alternativeName>
</protein>
<comment type="function">
    <text evidence="7 9">Pore-forming (alpha) subunit of voltage-gated inwardly rectifying potassium channel (PubMed:11212207, PubMed:9390998). Characterized by unusual gating kinetics by producing relatively small outward currents during membrane depolarization and large inward currents during subsequent repolarization which reflect a rapid inactivation during depolarization and quick recovery from inactivation but slow deactivation (closing) during repolarization (PubMed:11212207, PubMed:9390998). Activates even more slowly than KCNH2 (PubMed:9390998).</text>
</comment>
<comment type="catalytic activity">
    <reaction evidence="7 9">
        <text>K(+)(in) = K(+)(out)</text>
        <dbReference type="Rhea" id="RHEA:29463"/>
        <dbReference type="ChEBI" id="CHEBI:29103"/>
    </reaction>
</comment>
<comment type="subunit">
    <text evidence="7">The potassium channel is probably composed of a homo- or heterotetrameric complex of pore-forming alpha subunits that can associate only within their subfamily.</text>
</comment>
<comment type="subcellular location">
    <subcellularLocation>
        <location evidence="1">Cell membrane</location>
        <topology evidence="1">Multi-pass membrane protein</topology>
    </subcellularLocation>
</comment>
<comment type="tissue specificity">
    <text evidence="6 8">Highly expressed in celiac and superior mesenteric ganglia, but not detected in brain or in heart. Detected at low levels in retina (PubMed:11425889). Also found in pituitary (PubMed:10718922). Also found in the olfactory bulb (granular and mitral cell layers) (PubMed:11425889).</text>
</comment>
<comment type="domain">
    <text evidence="1">The S4-S5 linker acts as a signal integrator where it both couples voltage-sensor domain (VSD) movement to pore opening and closure, as well as providing a binding site for other domains that regulate activation and/or deactivation of the channel.</text>
</comment>
<comment type="similarity">
    <text evidence="10">Belongs to the potassium channel family. H (Eag) (TC 1.A.1.20) subfamily. Kv11.2/KCNH6 sub-subfamily.</text>
</comment>
<dbReference type="EMBL" id="AF016192">
    <property type="protein sequence ID" value="AAB94742.1"/>
    <property type="molecule type" value="mRNA"/>
</dbReference>
<dbReference type="RefSeq" id="NP_446389.1">
    <property type="nucleotide sequence ID" value="NM_053937.1"/>
</dbReference>
<dbReference type="BMRB" id="O54853"/>
<dbReference type="SMR" id="O54853"/>
<dbReference type="CORUM" id="O54853"/>
<dbReference type="FunCoup" id="O54853">
    <property type="interactions" value="355"/>
</dbReference>
<dbReference type="STRING" id="10116.ENSRNOP00000010816"/>
<dbReference type="GuidetoPHARMACOLOGY" id="573"/>
<dbReference type="TCDB" id="1.A.1.20.2">
    <property type="family name" value="the voltage-gated ion channel (vic) superfamily"/>
</dbReference>
<dbReference type="PhosphoSitePlus" id="O54853"/>
<dbReference type="PaxDb" id="10116-ENSRNOP00000010816"/>
<dbReference type="GeneID" id="116745"/>
<dbReference type="KEGG" id="rno:116745"/>
<dbReference type="UCSC" id="RGD:620304">
    <property type="organism name" value="rat"/>
</dbReference>
<dbReference type="AGR" id="RGD:620304"/>
<dbReference type="CTD" id="81033"/>
<dbReference type="RGD" id="620304">
    <property type="gene designation" value="Kcnh6"/>
</dbReference>
<dbReference type="eggNOG" id="KOG0498">
    <property type="taxonomic scope" value="Eukaryota"/>
</dbReference>
<dbReference type="InParanoid" id="O54853"/>
<dbReference type="PhylomeDB" id="O54853"/>
<dbReference type="Reactome" id="R-RNO-1296072">
    <property type="pathway name" value="Voltage gated Potassium channels"/>
</dbReference>
<dbReference type="PRO" id="PR:O54853"/>
<dbReference type="Proteomes" id="UP000002494">
    <property type="component" value="Unplaced"/>
</dbReference>
<dbReference type="GO" id="GO:0034702">
    <property type="term" value="C:monoatomic ion channel complex"/>
    <property type="evidence" value="ECO:0007669"/>
    <property type="project" value="UniProtKB-KW"/>
</dbReference>
<dbReference type="GO" id="GO:0005886">
    <property type="term" value="C:plasma membrane"/>
    <property type="evidence" value="ECO:0000318"/>
    <property type="project" value="GO_Central"/>
</dbReference>
<dbReference type="GO" id="GO:0005242">
    <property type="term" value="F:inward rectifier potassium channel activity"/>
    <property type="evidence" value="ECO:0000314"/>
    <property type="project" value="UniProtKB"/>
</dbReference>
<dbReference type="GO" id="GO:0005267">
    <property type="term" value="F:potassium channel activity"/>
    <property type="evidence" value="ECO:0000304"/>
    <property type="project" value="RGD"/>
</dbReference>
<dbReference type="GO" id="GO:0044877">
    <property type="term" value="F:protein-containing complex binding"/>
    <property type="evidence" value="ECO:0000314"/>
    <property type="project" value="RGD"/>
</dbReference>
<dbReference type="GO" id="GO:0005249">
    <property type="term" value="F:voltage-gated potassium channel activity"/>
    <property type="evidence" value="ECO:0000314"/>
    <property type="project" value="RGD"/>
</dbReference>
<dbReference type="GO" id="GO:0086013">
    <property type="term" value="P:membrane repolarization during cardiac muscle cell action potential"/>
    <property type="evidence" value="ECO:0000318"/>
    <property type="project" value="GO_Central"/>
</dbReference>
<dbReference type="GO" id="GO:0071805">
    <property type="term" value="P:potassium ion transmembrane transport"/>
    <property type="evidence" value="ECO:0000318"/>
    <property type="project" value="GO_Central"/>
</dbReference>
<dbReference type="GO" id="GO:0006813">
    <property type="term" value="P:potassium ion transport"/>
    <property type="evidence" value="ECO:0000314"/>
    <property type="project" value="RGD"/>
</dbReference>
<dbReference type="GO" id="GO:0086091">
    <property type="term" value="P:regulation of heart rate by cardiac conduction"/>
    <property type="evidence" value="ECO:0000318"/>
    <property type="project" value="GO_Central"/>
</dbReference>
<dbReference type="GO" id="GO:0060307">
    <property type="term" value="P:regulation of ventricular cardiac muscle cell membrane repolarization"/>
    <property type="evidence" value="ECO:0000318"/>
    <property type="project" value="GO_Central"/>
</dbReference>
<dbReference type="CDD" id="cd00038">
    <property type="entry name" value="CAP_ED"/>
    <property type="match status" value="1"/>
</dbReference>
<dbReference type="CDD" id="cd00130">
    <property type="entry name" value="PAS"/>
    <property type="match status" value="1"/>
</dbReference>
<dbReference type="FunFam" id="1.10.287.70:FF:000020">
    <property type="entry name" value="Potassium channel, voltage-gated eag-related subfamily H, member 7"/>
    <property type="match status" value="1"/>
</dbReference>
<dbReference type="FunFam" id="2.60.120.10:FF:000011">
    <property type="entry name" value="Potassium channel, voltage-gated eag-related subfamily H, member 7"/>
    <property type="match status" value="1"/>
</dbReference>
<dbReference type="FunFam" id="1.10.1200.260:FF:000001">
    <property type="entry name" value="Potassium voltage-gated channel subfamily H member 7"/>
    <property type="match status" value="1"/>
</dbReference>
<dbReference type="FunFam" id="3.30.450.20:FF:000001">
    <property type="entry name" value="Potassium voltage-gated channel subfamily H member 7"/>
    <property type="match status" value="1"/>
</dbReference>
<dbReference type="Gene3D" id="1.10.1200.260">
    <property type="match status" value="1"/>
</dbReference>
<dbReference type="Gene3D" id="1.10.287.70">
    <property type="match status" value="1"/>
</dbReference>
<dbReference type="Gene3D" id="2.60.120.10">
    <property type="entry name" value="Jelly Rolls"/>
    <property type="match status" value="1"/>
</dbReference>
<dbReference type="Gene3D" id="3.30.450.20">
    <property type="entry name" value="PAS domain"/>
    <property type="match status" value="1"/>
</dbReference>
<dbReference type="InterPro" id="IPR000595">
    <property type="entry name" value="cNMP-bd_dom"/>
</dbReference>
<dbReference type="InterPro" id="IPR018490">
    <property type="entry name" value="cNMP-bd_dom_sf"/>
</dbReference>
<dbReference type="InterPro" id="IPR005821">
    <property type="entry name" value="Ion_trans_dom"/>
</dbReference>
<dbReference type="InterPro" id="IPR003938">
    <property type="entry name" value="K_chnl_volt-dep_EAG/ELK/ERG"/>
</dbReference>
<dbReference type="InterPro" id="IPR003967">
    <property type="entry name" value="K_chnl_volt-dep_ERG"/>
</dbReference>
<dbReference type="InterPro" id="IPR050818">
    <property type="entry name" value="KCNH_animal-type"/>
</dbReference>
<dbReference type="InterPro" id="IPR000014">
    <property type="entry name" value="PAS"/>
</dbReference>
<dbReference type="InterPro" id="IPR035965">
    <property type="entry name" value="PAS-like_dom_sf"/>
</dbReference>
<dbReference type="InterPro" id="IPR014710">
    <property type="entry name" value="RmlC-like_jellyroll"/>
</dbReference>
<dbReference type="NCBIfam" id="TIGR00229">
    <property type="entry name" value="sensory_box"/>
    <property type="match status" value="1"/>
</dbReference>
<dbReference type="PANTHER" id="PTHR10217:SF468">
    <property type="entry name" value="POTASSIUM VOLTAGE-GATED CHANNEL SUBFAMILY H MEMBER 6"/>
    <property type="match status" value="1"/>
</dbReference>
<dbReference type="PANTHER" id="PTHR10217">
    <property type="entry name" value="VOLTAGE AND LIGAND GATED POTASSIUM CHANNEL"/>
    <property type="match status" value="1"/>
</dbReference>
<dbReference type="Pfam" id="PF00027">
    <property type="entry name" value="cNMP_binding"/>
    <property type="match status" value="1"/>
</dbReference>
<dbReference type="Pfam" id="PF00520">
    <property type="entry name" value="Ion_trans"/>
    <property type="match status" value="1"/>
</dbReference>
<dbReference type="Pfam" id="PF13426">
    <property type="entry name" value="PAS_9"/>
    <property type="match status" value="1"/>
</dbReference>
<dbReference type="PRINTS" id="PR01463">
    <property type="entry name" value="EAGCHANLFMLY"/>
</dbReference>
<dbReference type="PRINTS" id="PR01470">
    <property type="entry name" value="ERGCHANNEL"/>
</dbReference>
<dbReference type="SMART" id="SM00100">
    <property type="entry name" value="cNMP"/>
    <property type="match status" value="1"/>
</dbReference>
<dbReference type="SUPFAM" id="SSF51206">
    <property type="entry name" value="cAMP-binding domain-like"/>
    <property type="match status" value="1"/>
</dbReference>
<dbReference type="SUPFAM" id="SSF55785">
    <property type="entry name" value="PYP-like sensor domain (PAS domain)"/>
    <property type="match status" value="1"/>
</dbReference>
<dbReference type="SUPFAM" id="SSF81324">
    <property type="entry name" value="Voltage-gated potassium channels"/>
    <property type="match status" value="1"/>
</dbReference>
<dbReference type="PROSITE" id="PS50042">
    <property type="entry name" value="CNMP_BINDING_3"/>
    <property type="match status" value="1"/>
</dbReference>
<sequence length="950" mass="105706">MPVRRGHVAPQNTYLDTIIRKFEGQSRKFLIANAQMENCAIIYCNDGFCELFGYSRVEVMQRPCTCDFLTGPNTPSSAVSRLAQALLGAEECKVDILYYRKDASSFRCLVDVVPVKNEDGAVIMFILNFEDLAQLLAKSSSRSLTQRLLSHSFLGSEGSHSRPSGQGPGPGRGKYRTVSQIPQFTLNFVEFNLEKHRSGSTTEIEIIAPHKVVERTQNVTEKVTQVLSLGADVLPEYKLQAPRIHRGTILHYSPFKAVWDWLILLLVIYTAVFTPYSAAFLLSDQDESQRGTCGYTCSPLTVVDLIVDIMFVVDIVINFRTTYVNTNDEVVSHPRRIAVHYFKGWFLIDMVAAIPFDLLIFRTGSDETTTLIGLLKTARLLRLVRVARKLDRYSEYGAAVLFLLMCTFALIAHWLACIWYAIGNVERPYLEPKIGWLDSLGAQLGKQYNGSDPASGPSVQDKYVTALYFTFSSLTSVGFGNVSPNTNSEKVFSICVMLIGSLMYASIFGNVSAIIQRLYSGTARYHTQMLRVKEFIRFHQIPNPLRQRLEEYFQHAWSYTNGIDMNAVLKGFPECLQADICLHLHRALLQHCPAFRGASKGCLRALAVKFKTTHAPPGDTLVHLGDVLSTLYFISRGSIEILRDDVVVAILGKNDIFGEPASLHARPGKSSADVRALTYCDLHKIHRADLLEVLDMYPAFADTFWNKLEVTFNLRDADGGLQSTPRQAPGHQDPQGFFLNDSQSGAAPSLSISDTSALWPELLQQMPPSPPNPRQDLDCWHRELGFKLEQLQAQMNRLESRVSSDLSRILQLLQHPQGRPSYILGASASSDLASFPETSVTRSSESTLLVGHVPSAQTLSYGDLDDHIQTPRNFSPRTPHVAMAMDKTLVPSSEQEQPGGLLSPLASPLRPLEVPGLGGSRFPSLPEHLSSVPKQLEFQRHGSDPGFTRS</sequence>
<feature type="chain" id="PRO_0000054014" description="Voltage-gated inwardly rectifying potassium channel KCNH6">
    <location>
        <begin position="1"/>
        <end position="950"/>
    </location>
</feature>
<feature type="topological domain" description="Cytoplasmic" evidence="3">
    <location>
        <begin position="1"/>
        <end position="261"/>
    </location>
</feature>
<feature type="transmembrane region" description="Helical; Name=Segment S1" evidence="3">
    <location>
        <begin position="262"/>
        <end position="282"/>
    </location>
</feature>
<feature type="topological domain" description="Extracellular" evidence="3">
    <location>
        <begin position="283"/>
        <end position="298"/>
    </location>
</feature>
<feature type="transmembrane region" description="Helical; Name=Segment S2" evidence="3">
    <location>
        <begin position="299"/>
        <end position="319"/>
    </location>
</feature>
<feature type="topological domain" description="Cytoplasmic" evidence="3">
    <location>
        <begin position="320"/>
        <end position="340"/>
    </location>
</feature>
<feature type="transmembrane region" description="Helical; Name=Segment S3" evidence="3">
    <location>
        <begin position="341"/>
        <end position="361"/>
    </location>
</feature>
<feature type="topological domain" description="Extracellular" evidence="3">
    <location>
        <begin position="362"/>
        <end position="370"/>
    </location>
</feature>
<feature type="transmembrane region" description="Helical; Voltage-sensor; Name=Segment S4" evidence="3">
    <location>
        <begin position="371"/>
        <end position="391"/>
    </location>
</feature>
<feature type="topological domain" description="Cytoplasmic" evidence="3">
    <location>
        <begin position="392"/>
        <end position="398"/>
    </location>
</feature>
<feature type="transmembrane region" description="Helical; Name=Segment S5" evidence="3">
    <location>
        <begin position="399"/>
        <end position="419"/>
    </location>
</feature>
<feature type="topological domain" description="Extracellular" evidence="3">
    <location>
        <begin position="420"/>
        <end position="463"/>
    </location>
</feature>
<feature type="intramembrane region" description="Pore-forming; Name=Segment H5" evidence="3">
    <location>
        <begin position="464"/>
        <end position="484"/>
    </location>
</feature>
<feature type="topological domain" description="Extracellular" evidence="3">
    <location>
        <begin position="485"/>
        <end position="490"/>
    </location>
</feature>
<feature type="transmembrane region" description="Helical; Name=Segment S6" evidence="3">
    <location>
        <begin position="491"/>
        <end position="511"/>
    </location>
</feature>
<feature type="topological domain" description="Cytoplasmic" evidence="3">
    <location>
        <begin position="512"/>
        <end position="950"/>
    </location>
</feature>
<feature type="domain" description="PAS">
    <location>
        <begin position="41"/>
        <end position="70"/>
    </location>
</feature>
<feature type="domain" description="PAC">
    <location>
        <begin position="92"/>
        <end position="144"/>
    </location>
</feature>
<feature type="region of interest" description="Disordered" evidence="5">
    <location>
        <begin position="154"/>
        <end position="174"/>
    </location>
</feature>
<feature type="region of interest" description="cNMP-binding domain" evidence="4">
    <location>
        <begin position="594"/>
        <end position="694"/>
    </location>
</feature>
<feature type="region of interest" description="Disordered" evidence="5">
    <location>
        <begin position="719"/>
        <end position="750"/>
    </location>
</feature>
<feature type="region of interest" description="Disordered" evidence="5">
    <location>
        <begin position="890"/>
        <end position="950"/>
    </location>
</feature>
<feature type="short sequence motif" description="Selectivity filter" evidence="2">
    <location>
        <begin position="476"/>
        <end position="481"/>
    </location>
</feature>
<feature type="compositionally biased region" description="Polar residues" evidence="5">
    <location>
        <begin position="740"/>
        <end position="750"/>
    </location>
</feature>
<feature type="compositionally biased region" description="Low complexity" evidence="5">
    <location>
        <begin position="898"/>
        <end position="912"/>
    </location>
</feature>
<feature type="mutagenesis site" description="Dominant negative mutant; abolishes ERG current." evidence="7">
    <original>G</original>
    <variation>S</variation>
    <location>
        <position position="480"/>
    </location>
</feature>
<organism>
    <name type="scientific">Rattus norvegicus</name>
    <name type="common">Rat</name>
    <dbReference type="NCBI Taxonomy" id="10116"/>
    <lineage>
        <taxon>Eukaryota</taxon>
        <taxon>Metazoa</taxon>
        <taxon>Chordata</taxon>
        <taxon>Craniata</taxon>
        <taxon>Vertebrata</taxon>
        <taxon>Euteleostomi</taxon>
        <taxon>Mammalia</taxon>
        <taxon>Eutheria</taxon>
        <taxon>Euarchontoglires</taxon>
        <taxon>Glires</taxon>
        <taxon>Rodentia</taxon>
        <taxon>Myomorpha</taxon>
        <taxon>Muroidea</taxon>
        <taxon>Muridae</taxon>
        <taxon>Murinae</taxon>
        <taxon>Rattus</taxon>
    </lineage>
</organism>
<keyword id="KW-1003">Cell membrane</keyword>
<keyword id="KW-0407">Ion channel</keyword>
<keyword id="KW-0406">Ion transport</keyword>
<keyword id="KW-0472">Membrane</keyword>
<keyword id="KW-0630">Potassium</keyword>
<keyword id="KW-0631">Potassium channel</keyword>
<keyword id="KW-0633">Potassium transport</keyword>
<keyword id="KW-1185">Reference proteome</keyword>
<keyword id="KW-0812">Transmembrane</keyword>
<keyword id="KW-1133">Transmembrane helix</keyword>
<keyword id="KW-0813">Transport</keyword>
<keyword id="KW-0851">Voltage-gated channel</keyword>
<gene>
    <name evidence="11" type="primary">Kcnh6</name>
    <name type="synonym">Erg2</name>
</gene>
<name>KCNH6_RAT</name>
<accession>O54853</accession>